<gene>
    <name evidence="1" type="primary">metK</name>
    <name type="ordered locus">SERP1352</name>
</gene>
<keyword id="KW-0067">ATP-binding</keyword>
<keyword id="KW-0963">Cytoplasm</keyword>
<keyword id="KW-0460">Magnesium</keyword>
<keyword id="KW-0479">Metal-binding</keyword>
<keyword id="KW-0547">Nucleotide-binding</keyword>
<keyword id="KW-0554">One-carbon metabolism</keyword>
<keyword id="KW-0630">Potassium</keyword>
<keyword id="KW-1185">Reference proteome</keyword>
<keyword id="KW-0808">Transferase</keyword>
<dbReference type="EC" id="2.5.1.6" evidence="1"/>
<dbReference type="EMBL" id="CP000029">
    <property type="protein sequence ID" value="AAW54717.1"/>
    <property type="molecule type" value="Genomic_DNA"/>
</dbReference>
<dbReference type="RefSeq" id="WP_001829830.1">
    <property type="nucleotide sequence ID" value="NC_002976.3"/>
</dbReference>
<dbReference type="SMR" id="Q5HNB8"/>
<dbReference type="STRING" id="176279.SERP1352"/>
<dbReference type="GeneID" id="50018435"/>
<dbReference type="KEGG" id="ser:SERP1352"/>
<dbReference type="eggNOG" id="COG0192">
    <property type="taxonomic scope" value="Bacteria"/>
</dbReference>
<dbReference type="HOGENOM" id="CLU_041802_1_1_9"/>
<dbReference type="UniPathway" id="UPA00315">
    <property type="reaction ID" value="UER00080"/>
</dbReference>
<dbReference type="Proteomes" id="UP000000531">
    <property type="component" value="Chromosome"/>
</dbReference>
<dbReference type="GO" id="GO:0005737">
    <property type="term" value="C:cytoplasm"/>
    <property type="evidence" value="ECO:0007669"/>
    <property type="project" value="UniProtKB-SubCell"/>
</dbReference>
<dbReference type="GO" id="GO:0005524">
    <property type="term" value="F:ATP binding"/>
    <property type="evidence" value="ECO:0007669"/>
    <property type="project" value="UniProtKB-UniRule"/>
</dbReference>
<dbReference type="GO" id="GO:0000287">
    <property type="term" value="F:magnesium ion binding"/>
    <property type="evidence" value="ECO:0007669"/>
    <property type="project" value="UniProtKB-UniRule"/>
</dbReference>
<dbReference type="GO" id="GO:0004478">
    <property type="term" value="F:methionine adenosyltransferase activity"/>
    <property type="evidence" value="ECO:0007669"/>
    <property type="project" value="UniProtKB-UniRule"/>
</dbReference>
<dbReference type="GO" id="GO:0006730">
    <property type="term" value="P:one-carbon metabolic process"/>
    <property type="evidence" value="ECO:0007669"/>
    <property type="project" value="UniProtKB-KW"/>
</dbReference>
<dbReference type="GO" id="GO:0006556">
    <property type="term" value="P:S-adenosylmethionine biosynthetic process"/>
    <property type="evidence" value="ECO:0007669"/>
    <property type="project" value="UniProtKB-UniRule"/>
</dbReference>
<dbReference type="CDD" id="cd18079">
    <property type="entry name" value="S-AdoMet_synt"/>
    <property type="match status" value="1"/>
</dbReference>
<dbReference type="FunFam" id="3.30.300.10:FF:000003">
    <property type="entry name" value="S-adenosylmethionine synthase"/>
    <property type="match status" value="1"/>
</dbReference>
<dbReference type="FunFam" id="3.30.300.10:FF:000004">
    <property type="entry name" value="S-adenosylmethionine synthase"/>
    <property type="match status" value="1"/>
</dbReference>
<dbReference type="Gene3D" id="3.30.300.10">
    <property type="match status" value="3"/>
</dbReference>
<dbReference type="HAMAP" id="MF_00086">
    <property type="entry name" value="S_AdoMet_synth1"/>
    <property type="match status" value="1"/>
</dbReference>
<dbReference type="InterPro" id="IPR022631">
    <property type="entry name" value="ADOMET_SYNTHASE_CS"/>
</dbReference>
<dbReference type="InterPro" id="IPR022630">
    <property type="entry name" value="S-AdoMet_synt_C"/>
</dbReference>
<dbReference type="InterPro" id="IPR022629">
    <property type="entry name" value="S-AdoMet_synt_central"/>
</dbReference>
<dbReference type="InterPro" id="IPR022628">
    <property type="entry name" value="S-AdoMet_synt_N"/>
</dbReference>
<dbReference type="InterPro" id="IPR002133">
    <property type="entry name" value="S-AdoMet_synthetase"/>
</dbReference>
<dbReference type="InterPro" id="IPR022636">
    <property type="entry name" value="S-AdoMet_synthetase_sfam"/>
</dbReference>
<dbReference type="NCBIfam" id="TIGR01034">
    <property type="entry name" value="metK"/>
    <property type="match status" value="1"/>
</dbReference>
<dbReference type="PANTHER" id="PTHR11964">
    <property type="entry name" value="S-ADENOSYLMETHIONINE SYNTHETASE"/>
    <property type="match status" value="1"/>
</dbReference>
<dbReference type="Pfam" id="PF02773">
    <property type="entry name" value="S-AdoMet_synt_C"/>
    <property type="match status" value="1"/>
</dbReference>
<dbReference type="Pfam" id="PF02772">
    <property type="entry name" value="S-AdoMet_synt_M"/>
    <property type="match status" value="1"/>
</dbReference>
<dbReference type="Pfam" id="PF00438">
    <property type="entry name" value="S-AdoMet_synt_N"/>
    <property type="match status" value="1"/>
</dbReference>
<dbReference type="PIRSF" id="PIRSF000497">
    <property type="entry name" value="MAT"/>
    <property type="match status" value="1"/>
</dbReference>
<dbReference type="SUPFAM" id="SSF55973">
    <property type="entry name" value="S-adenosylmethionine synthetase"/>
    <property type="match status" value="3"/>
</dbReference>
<dbReference type="PROSITE" id="PS00376">
    <property type="entry name" value="ADOMET_SYNTHASE_1"/>
    <property type="match status" value="1"/>
</dbReference>
<dbReference type="PROSITE" id="PS00377">
    <property type="entry name" value="ADOMET_SYNTHASE_2"/>
    <property type="match status" value="1"/>
</dbReference>
<reference key="1">
    <citation type="journal article" date="2005" name="J. Bacteriol.">
        <title>Insights on evolution of virulence and resistance from the complete genome analysis of an early methicillin-resistant Staphylococcus aureus strain and a biofilm-producing methicillin-resistant Staphylococcus epidermidis strain.</title>
        <authorList>
            <person name="Gill S.R."/>
            <person name="Fouts D.E."/>
            <person name="Archer G.L."/>
            <person name="Mongodin E.F."/>
            <person name="DeBoy R.T."/>
            <person name="Ravel J."/>
            <person name="Paulsen I.T."/>
            <person name="Kolonay J.F."/>
            <person name="Brinkac L.M."/>
            <person name="Beanan M.J."/>
            <person name="Dodson R.J."/>
            <person name="Daugherty S.C."/>
            <person name="Madupu R."/>
            <person name="Angiuoli S.V."/>
            <person name="Durkin A.S."/>
            <person name="Haft D.H."/>
            <person name="Vamathevan J.J."/>
            <person name="Khouri H."/>
            <person name="Utterback T.R."/>
            <person name="Lee C."/>
            <person name="Dimitrov G."/>
            <person name="Jiang L."/>
            <person name="Qin H."/>
            <person name="Weidman J."/>
            <person name="Tran K."/>
            <person name="Kang K.H."/>
            <person name="Hance I.R."/>
            <person name="Nelson K.E."/>
            <person name="Fraser C.M."/>
        </authorList>
    </citation>
    <scope>NUCLEOTIDE SEQUENCE [LARGE SCALE GENOMIC DNA]</scope>
    <source>
        <strain>ATCC 35984 / DSM 28319 / BCRC 17069 / CCUG 31568 / BM 3577 / RP62A</strain>
    </source>
</reference>
<feature type="chain" id="PRO_0000174594" description="S-adenosylmethionine synthase">
    <location>
        <begin position="1"/>
        <end position="399"/>
    </location>
</feature>
<feature type="region of interest" description="Flexible loop" evidence="1">
    <location>
        <begin position="101"/>
        <end position="111"/>
    </location>
</feature>
<feature type="binding site" description="in other chain" evidence="1">
    <location>
        <position position="17"/>
    </location>
    <ligand>
        <name>ATP</name>
        <dbReference type="ChEBI" id="CHEBI:30616"/>
        <note>ligand shared between two neighboring subunits</note>
    </ligand>
</feature>
<feature type="binding site" evidence="1">
    <location>
        <position position="19"/>
    </location>
    <ligand>
        <name>Mg(2+)</name>
        <dbReference type="ChEBI" id="CHEBI:18420"/>
    </ligand>
</feature>
<feature type="binding site" evidence="1">
    <location>
        <position position="45"/>
    </location>
    <ligand>
        <name>K(+)</name>
        <dbReference type="ChEBI" id="CHEBI:29103"/>
    </ligand>
</feature>
<feature type="binding site" description="in other chain" evidence="1">
    <location>
        <position position="58"/>
    </location>
    <ligand>
        <name>L-methionine</name>
        <dbReference type="ChEBI" id="CHEBI:57844"/>
        <note>ligand shared between two neighboring subunits</note>
    </ligand>
</feature>
<feature type="binding site" description="in other chain" evidence="1">
    <location>
        <position position="101"/>
    </location>
    <ligand>
        <name>L-methionine</name>
        <dbReference type="ChEBI" id="CHEBI:57844"/>
        <note>ligand shared between two neighboring subunits</note>
    </ligand>
</feature>
<feature type="binding site" description="in other chain" evidence="1">
    <location>
        <begin position="176"/>
        <end position="178"/>
    </location>
    <ligand>
        <name>ATP</name>
        <dbReference type="ChEBI" id="CHEBI:30616"/>
        <note>ligand shared between two neighboring subunits</note>
    </ligand>
</feature>
<feature type="binding site" description="in other chain" evidence="1">
    <location>
        <begin position="243"/>
        <end position="244"/>
    </location>
    <ligand>
        <name>ATP</name>
        <dbReference type="ChEBI" id="CHEBI:30616"/>
        <note>ligand shared between two neighboring subunits</note>
    </ligand>
</feature>
<feature type="binding site" evidence="1">
    <location>
        <position position="252"/>
    </location>
    <ligand>
        <name>ATP</name>
        <dbReference type="ChEBI" id="CHEBI:30616"/>
        <note>ligand shared between two neighboring subunits</note>
    </ligand>
</feature>
<feature type="binding site" evidence="1">
    <location>
        <position position="252"/>
    </location>
    <ligand>
        <name>L-methionine</name>
        <dbReference type="ChEBI" id="CHEBI:57844"/>
        <note>ligand shared between two neighboring subunits</note>
    </ligand>
</feature>
<feature type="binding site" description="in other chain" evidence="1">
    <location>
        <begin position="258"/>
        <end position="259"/>
    </location>
    <ligand>
        <name>ATP</name>
        <dbReference type="ChEBI" id="CHEBI:30616"/>
        <note>ligand shared between two neighboring subunits</note>
    </ligand>
</feature>
<feature type="binding site" evidence="1">
    <location>
        <position position="279"/>
    </location>
    <ligand>
        <name>ATP</name>
        <dbReference type="ChEBI" id="CHEBI:30616"/>
        <note>ligand shared between two neighboring subunits</note>
    </ligand>
</feature>
<feature type="binding site" description="in other chain" evidence="1">
    <location>
        <position position="283"/>
    </location>
    <ligand>
        <name>L-methionine</name>
        <dbReference type="ChEBI" id="CHEBI:57844"/>
        <note>ligand shared between two neighboring subunits</note>
    </ligand>
</feature>
<evidence type="ECO:0000255" key="1">
    <source>
        <dbReference type="HAMAP-Rule" id="MF_00086"/>
    </source>
</evidence>
<name>METK_STAEQ</name>
<protein>
    <recommendedName>
        <fullName evidence="1">S-adenosylmethionine synthase</fullName>
        <shortName evidence="1">AdoMet synthase</shortName>
        <ecNumber evidence="1">2.5.1.6</ecNumber>
    </recommendedName>
    <alternativeName>
        <fullName evidence="1">MAT</fullName>
    </alternativeName>
    <alternativeName>
        <fullName evidence="1">Methionine adenosyltransferase</fullName>
    </alternativeName>
</protein>
<comment type="function">
    <text evidence="1">Catalyzes the formation of S-adenosylmethionine (AdoMet) from methionine and ATP. The overall synthetic reaction is composed of two sequential steps, AdoMet formation and the subsequent tripolyphosphate hydrolysis which occurs prior to release of AdoMet from the enzyme.</text>
</comment>
<comment type="catalytic activity">
    <reaction evidence="1">
        <text>L-methionine + ATP + H2O = S-adenosyl-L-methionine + phosphate + diphosphate</text>
        <dbReference type="Rhea" id="RHEA:21080"/>
        <dbReference type="ChEBI" id="CHEBI:15377"/>
        <dbReference type="ChEBI" id="CHEBI:30616"/>
        <dbReference type="ChEBI" id="CHEBI:33019"/>
        <dbReference type="ChEBI" id="CHEBI:43474"/>
        <dbReference type="ChEBI" id="CHEBI:57844"/>
        <dbReference type="ChEBI" id="CHEBI:59789"/>
        <dbReference type="EC" id="2.5.1.6"/>
    </reaction>
</comment>
<comment type="cofactor">
    <cofactor evidence="1">
        <name>Mg(2+)</name>
        <dbReference type="ChEBI" id="CHEBI:18420"/>
    </cofactor>
    <text evidence="1">Binds 2 divalent ions per subunit.</text>
</comment>
<comment type="cofactor">
    <cofactor evidence="1">
        <name>K(+)</name>
        <dbReference type="ChEBI" id="CHEBI:29103"/>
    </cofactor>
    <text evidence="1">Binds 1 potassium ion per subunit.</text>
</comment>
<comment type="pathway">
    <text evidence="1">Amino-acid biosynthesis; S-adenosyl-L-methionine biosynthesis; S-adenosyl-L-methionine from L-methionine: step 1/1.</text>
</comment>
<comment type="subunit">
    <text evidence="1">Homotetramer; dimer of dimers.</text>
</comment>
<comment type="subcellular location">
    <subcellularLocation>
        <location evidence="1">Cytoplasm</location>
    </subcellularLocation>
</comment>
<comment type="similarity">
    <text evidence="1">Belongs to the AdoMet synthase family.</text>
</comment>
<accession>Q5HNB8</accession>
<organism>
    <name type="scientific">Staphylococcus epidermidis (strain ATCC 35984 / DSM 28319 / BCRC 17069 / CCUG 31568 / BM 3577 / RP62A)</name>
    <dbReference type="NCBI Taxonomy" id="176279"/>
    <lineage>
        <taxon>Bacteria</taxon>
        <taxon>Bacillati</taxon>
        <taxon>Bacillota</taxon>
        <taxon>Bacilli</taxon>
        <taxon>Bacillales</taxon>
        <taxon>Staphylococcaceae</taxon>
        <taxon>Staphylococcus</taxon>
    </lineage>
</organism>
<proteinExistence type="inferred from homology"/>
<sequence>MTYNKRLFTSESVTEGHPDKIADQVSDAILDEILKDDPNARVACETTVTTGMALISGEISTTTYVDIPKVVRETIKDIGYTRAKYGYDSQTMAVLTAIDEQSPDIAQGVDKALEYRNDISEEEIEATGAGDQGLMFGYATDETDTYMPLPIFLSHQLAKRLADVRKDEILDYLRPDGKVQVTVEYGEDDKPRRIDTIVVSTQHAEDVELAQIEKDIKTHVIYPTVDKALLDDETKFYINPTGRFVIGGPQGDAGLTGRKIIVDTYGGYARHGGGCFSGKDPTKVDRSAAYAARYVAKNIVAAGLAKQCEVQLAYAIGVAEPVSISINTFDTGKVSEARLVEAVRKHFDLRPAGIIKMLDLKQPIYRQTAAYGHFGRTDVLLPWEKLDKVNVLKDAVEIQ</sequence>